<dbReference type="EC" id="2.4.2.7" evidence="1"/>
<dbReference type="EMBL" id="CP000360">
    <property type="protein sequence ID" value="ABF42609.1"/>
    <property type="molecule type" value="Genomic_DNA"/>
</dbReference>
<dbReference type="RefSeq" id="WP_011524408.1">
    <property type="nucleotide sequence ID" value="NC_008009.1"/>
</dbReference>
<dbReference type="SMR" id="Q1IKJ1"/>
<dbReference type="STRING" id="204669.Acid345_3608"/>
<dbReference type="EnsemblBacteria" id="ABF42609">
    <property type="protein sequence ID" value="ABF42609"/>
    <property type="gene ID" value="Acid345_3608"/>
</dbReference>
<dbReference type="KEGG" id="aba:Acid345_3608"/>
<dbReference type="eggNOG" id="COG0503">
    <property type="taxonomic scope" value="Bacteria"/>
</dbReference>
<dbReference type="HOGENOM" id="CLU_063339_3_0_0"/>
<dbReference type="OrthoDB" id="9803963at2"/>
<dbReference type="UniPathway" id="UPA00588">
    <property type="reaction ID" value="UER00646"/>
</dbReference>
<dbReference type="Proteomes" id="UP000002432">
    <property type="component" value="Chromosome"/>
</dbReference>
<dbReference type="GO" id="GO:0005737">
    <property type="term" value="C:cytoplasm"/>
    <property type="evidence" value="ECO:0007669"/>
    <property type="project" value="UniProtKB-SubCell"/>
</dbReference>
<dbReference type="GO" id="GO:0002055">
    <property type="term" value="F:adenine binding"/>
    <property type="evidence" value="ECO:0007669"/>
    <property type="project" value="TreeGrafter"/>
</dbReference>
<dbReference type="GO" id="GO:0003999">
    <property type="term" value="F:adenine phosphoribosyltransferase activity"/>
    <property type="evidence" value="ECO:0007669"/>
    <property type="project" value="UniProtKB-UniRule"/>
</dbReference>
<dbReference type="GO" id="GO:0016208">
    <property type="term" value="F:AMP binding"/>
    <property type="evidence" value="ECO:0007669"/>
    <property type="project" value="TreeGrafter"/>
</dbReference>
<dbReference type="GO" id="GO:0006168">
    <property type="term" value="P:adenine salvage"/>
    <property type="evidence" value="ECO:0007669"/>
    <property type="project" value="InterPro"/>
</dbReference>
<dbReference type="GO" id="GO:0044209">
    <property type="term" value="P:AMP salvage"/>
    <property type="evidence" value="ECO:0007669"/>
    <property type="project" value="UniProtKB-UniRule"/>
</dbReference>
<dbReference type="GO" id="GO:0006166">
    <property type="term" value="P:purine ribonucleoside salvage"/>
    <property type="evidence" value="ECO:0007669"/>
    <property type="project" value="UniProtKB-KW"/>
</dbReference>
<dbReference type="CDD" id="cd06223">
    <property type="entry name" value="PRTases_typeI"/>
    <property type="match status" value="1"/>
</dbReference>
<dbReference type="FunFam" id="3.40.50.2020:FF:000004">
    <property type="entry name" value="Adenine phosphoribosyltransferase"/>
    <property type="match status" value="1"/>
</dbReference>
<dbReference type="Gene3D" id="3.40.50.2020">
    <property type="match status" value="1"/>
</dbReference>
<dbReference type="HAMAP" id="MF_00004">
    <property type="entry name" value="Aden_phosphoribosyltr"/>
    <property type="match status" value="1"/>
</dbReference>
<dbReference type="InterPro" id="IPR005764">
    <property type="entry name" value="Ade_phspho_trans"/>
</dbReference>
<dbReference type="InterPro" id="IPR000836">
    <property type="entry name" value="PRibTrfase_dom"/>
</dbReference>
<dbReference type="InterPro" id="IPR029057">
    <property type="entry name" value="PRTase-like"/>
</dbReference>
<dbReference type="InterPro" id="IPR050054">
    <property type="entry name" value="UPRTase/APRTase"/>
</dbReference>
<dbReference type="NCBIfam" id="TIGR01090">
    <property type="entry name" value="apt"/>
    <property type="match status" value="1"/>
</dbReference>
<dbReference type="NCBIfam" id="NF002633">
    <property type="entry name" value="PRK02304.1-2"/>
    <property type="match status" value="1"/>
</dbReference>
<dbReference type="NCBIfam" id="NF002634">
    <property type="entry name" value="PRK02304.1-3"/>
    <property type="match status" value="1"/>
</dbReference>
<dbReference type="NCBIfam" id="NF002636">
    <property type="entry name" value="PRK02304.1-5"/>
    <property type="match status" value="1"/>
</dbReference>
<dbReference type="PANTHER" id="PTHR32315">
    <property type="entry name" value="ADENINE PHOSPHORIBOSYLTRANSFERASE"/>
    <property type="match status" value="1"/>
</dbReference>
<dbReference type="PANTHER" id="PTHR32315:SF3">
    <property type="entry name" value="ADENINE PHOSPHORIBOSYLTRANSFERASE"/>
    <property type="match status" value="1"/>
</dbReference>
<dbReference type="Pfam" id="PF00156">
    <property type="entry name" value="Pribosyltran"/>
    <property type="match status" value="1"/>
</dbReference>
<dbReference type="SUPFAM" id="SSF53271">
    <property type="entry name" value="PRTase-like"/>
    <property type="match status" value="1"/>
</dbReference>
<dbReference type="PROSITE" id="PS00103">
    <property type="entry name" value="PUR_PYR_PR_TRANSFER"/>
    <property type="match status" value="1"/>
</dbReference>
<accession>Q1IKJ1</accession>
<gene>
    <name evidence="1" type="primary">apt</name>
    <name type="ordered locus">Acid345_3608</name>
</gene>
<feature type="chain" id="PRO_0000321328" description="Adenine phosphoribosyltransferase">
    <location>
        <begin position="1"/>
        <end position="182"/>
    </location>
</feature>
<proteinExistence type="inferred from homology"/>
<name>APT_KORVE</name>
<comment type="function">
    <text evidence="1">Catalyzes a salvage reaction resulting in the formation of AMP, that is energically less costly than de novo synthesis.</text>
</comment>
<comment type="catalytic activity">
    <reaction evidence="1">
        <text>AMP + diphosphate = 5-phospho-alpha-D-ribose 1-diphosphate + adenine</text>
        <dbReference type="Rhea" id="RHEA:16609"/>
        <dbReference type="ChEBI" id="CHEBI:16708"/>
        <dbReference type="ChEBI" id="CHEBI:33019"/>
        <dbReference type="ChEBI" id="CHEBI:58017"/>
        <dbReference type="ChEBI" id="CHEBI:456215"/>
        <dbReference type="EC" id="2.4.2.7"/>
    </reaction>
</comment>
<comment type="pathway">
    <text evidence="1">Purine metabolism; AMP biosynthesis via salvage pathway; AMP from adenine: step 1/1.</text>
</comment>
<comment type="subunit">
    <text evidence="1">Homodimer.</text>
</comment>
<comment type="subcellular location">
    <subcellularLocation>
        <location evidence="1">Cytoplasm</location>
    </subcellularLocation>
</comment>
<comment type="similarity">
    <text evidence="1">Belongs to the purine/pyrimidine phosphoribosyltransferase family.</text>
</comment>
<organism>
    <name type="scientific">Koribacter versatilis (strain Ellin345)</name>
    <dbReference type="NCBI Taxonomy" id="204669"/>
    <lineage>
        <taxon>Bacteria</taxon>
        <taxon>Pseudomonadati</taxon>
        <taxon>Acidobacteriota</taxon>
        <taxon>Terriglobia</taxon>
        <taxon>Terriglobales</taxon>
        <taxon>Candidatus Korobacteraceae</taxon>
        <taxon>Candidatus Korobacter</taxon>
    </lineage>
</organism>
<keyword id="KW-0963">Cytoplasm</keyword>
<keyword id="KW-0328">Glycosyltransferase</keyword>
<keyword id="KW-0660">Purine salvage</keyword>
<keyword id="KW-1185">Reference proteome</keyword>
<keyword id="KW-0808">Transferase</keyword>
<protein>
    <recommendedName>
        <fullName evidence="1">Adenine phosphoribosyltransferase</fullName>
        <shortName evidence="1">APRT</shortName>
        <ecNumber evidence="1">2.4.2.7</ecNumber>
    </recommendedName>
</protein>
<sequence length="182" mass="20280">MSESTTGPCHDSLKAYVREIPDYPKPGILFYDITTLIKEPVGLARTIDGITEHFLNKNIDLVVGMEARGFIFGPAVAYRLNAGFIPIRKPRKLPGETVKHTYKLEYGEDTLEIHKDAIQKAQRVLVVDDLLATGGTAVAATELVKQLGGEICGIAFVIELDFLNGRERLKDYDVYSLLHYDK</sequence>
<evidence type="ECO:0000255" key="1">
    <source>
        <dbReference type="HAMAP-Rule" id="MF_00004"/>
    </source>
</evidence>
<reference key="1">
    <citation type="journal article" date="2009" name="Appl. Environ. Microbiol.">
        <title>Three genomes from the phylum Acidobacteria provide insight into the lifestyles of these microorganisms in soils.</title>
        <authorList>
            <person name="Ward N.L."/>
            <person name="Challacombe J.F."/>
            <person name="Janssen P.H."/>
            <person name="Henrissat B."/>
            <person name="Coutinho P.M."/>
            <person name="Wu M."/>
            <person name="Xie G."/>
            <person name="Haft D.H."/>
            <person name="Sait M."/>
            <person name="Badger J."/>
            <person name="Barabote R.D."/>
            <person name="Bradley B."/>
            <person name="Brettin T.S."/>
            <person name="Brinkac L.M."/>
            <person name="Bruce D."/>
            <person name="Creasy T."/>
            <person name="Daugherty S.C."/>
            <person name="Davidsen T.M."/>
            <person name="DeBoy R.T."/>
            <person name="Detter J.C."/>
            <person name="Dodson R.J."/>
            <person name="Durkin A.S."/>
            <person name="Ganapathy A."/>
            <person name="Gwinn-Giglio M."/>
            <person name="Han C.S."/>
            <person name="Khouri H."/>
            <person name="Kiss H."/>
            <person name="Kothari S.P."/>
            <person name="Madupu R."/>
            <person name="Nelson K.E."/>
            <person name="Nelson W.C."/>
            <person name="Paulsen I."/>
            <person name="Penn K."/>
            <person name="Ren Q."/>
            <person name="Rosovitz M.J."/>
            <person name="Selengut J.D."/>
            <person name="Shrivastava S."/>
            <person name="Sullivan S.A."/>
            <person name="Tapia R."/>
            <person name="Thompson L.S."/>
            <person name="Watkins K.L."/>
            <person name="Yang Q."/>
            <person name="Yu C."/>
            <person name="Zafar N."/>
            <person name="Zhou L."/>
            <person name="Kuske C.R."/>
        </authorList>
    </citation>
    <scope>NUCLEOTIDE SEQUENCE [LARGE SCALE GENOMIC DNA]</scope>
    <source>
        <strain>Ellin345</strain>
    </source>
</reference>